<proteinExistence type="inferred from homology"/>
<feature type="chain" id="PRO_1000071186" description="Peptide chain release factor 3">
    <location>
        <begin position="1"/>
        <end position="531"/>
    </location>
</feature>
<feature type="domain" description="tr-type G">
    <location>
        <begin position="13"/>
        <end position="282"/>
    </location>
</feature>
<feature type="binding site" evidence="1">
    <location>
        <begin position="22"/>
        <end position="29"/>
    </location>
    <ligand>
        <name>GTP</name>
        <dbReference type="ChEBI" id="CHEBI:37565"/>
    </ligand>
</feature>
<feature type="binding site" evidence="1">
    <location>
        <begin position="90"/>
        <end position="94"/>
    </location>
    <ligand>
        <name>GTP</name>
        <dbReference type="ChEBI" id="CHEBI:37565"/>
    </ligand>
</feature>
<feature type="binding site" evidence="1">
    <location>
        <begin position="144"/>
        <end position="147"/>
    </location>
    <ligand>
        <name>GTP</name>
        <dbReference type="ChEBI" id="CHEBI:37565"/>
    </ligand>
</feature>
<accession>A5WH45</accession>
<gene>
    <name evidence="1" type="primary">prfC</name>
    <name type="ordered locus">PsycPRwf_2046</name>
</gene>
<sequence length="531" mass="59809">MSVDPKTLNKQVAKRRTFAIISHPDAGKTTMTEKLLLWGQAIQVAGEVKGRKTDRHATSDWMSMEQERGISITTSVMQFPYKDHIVNLLDTPGHADFSEDTYRTLTAVDSALMMVDGAKGVEERTIKLMEVCRMRDTPIISFVNKLDRQIRDPLELLDEIETVLGIKCVPVTWPIGMGQDFVGVYHLTEDKTYLYKKGHGGEITEIETREGYDYPDVRQRLGELAFSAFEESLELVQMALENFDVDLFLKGEMTPVLFGTALGNFGVNMVLDTLIEHAPPPKSHPTNERIVAADETSFSGFVFKIQANMDPRHRDRIAFLRVCSGKYEKGMKMKHVRLGKDVRISDALTFLAGDREALEEAYPGDIIGLHNHGTISIGDSFTEGEELNFTGIPHFAPELFRRVVLKDPLKSKALQKGLQQLSEEGATQVFMPQINNDLILGAVGVLQFEVVAHRLKEEYKVQCIFEPVSIATVRWIHCDDEAILAKFKKKAHDQLSVDGGGHLTYLAPSRVNLQLMQERYPEVTFSNTREH</sequence>
<organism>
    <name type="scientific">Psychrobacter sp. (strain PRwf-1)</name>
    <dbReference type="NCBI Taxonomy" id="349106"/>
    <lineage>
        <taxon>Bacteria</taxon>
        <taxon>Pseudomonadati</taxon>
        <taxon>Pseudomonadota</taxon>
        <taxon>Gammaproteobacteria</taxon>
        <taxon>Moraxellales</taxon>
        <taxon>Moraxellaceae</taxon>
        <taxon>Psychrobacter</taxon>
    </lineage>
</organism>
<comment type="function">
    <text evidence="1">Increases the formation of ribosomal termination complexes and stimulates activities of RF-1 and RF-2. It binds guanine nucleotides and has strong preference for UGA stop codons. It may interact directly with the ribosome. The stimulation of RF-1 and RF-2 is significantly reduced by GTP and GDP, but not by GMP.</text>
</comment>
<comment type="subcellular location">
    <subcellularLocation>
        <location evidence="1">Cytoplasm</location>
    </subcellularLocation>
</comment>
<comment type="similarity">
    <text evidence="1">Belongs to the TRAFAC class translation factor GTPase superfamily. Classic translation factor GTPase family. PrfC subfamily.</text>
</comment>
<evidence type="ECO:0000255" key="1">
    <source>
        <dbReference type="HAMAP-Rule" id="MF_00072"/>
    </source>
</evidence>
<reference key="1">
    <citation type="submission" date="2007-05" db="EMBL/GenBank/DDBJ databases">
        <title>Complete sequence of chromosome of Psychrobacter sp. PRwf-1.</title>
        <authorList>
            <consortium name="US DOE Joint Genome Institute"/>
            <person name="Copeland A."/>
            <person name="Lucas S."/>
            <person name="Lapidus A."/>
            <person name="Barry K."/>
            <person name="Detter J.C."/>
            <person name="Glavina del Rio T."/>
            <person name="Hammon N."/>
            <person name="Israni S."/>
            <person name="Dalin E."/>
            <person name="Tice H."/>
            <person name="Pitluck S."/>
            <person name="Chain P."/>
            <person name="Malfatti S."/>
            <person name="Shin M."/>
            <person name="Vergez L."/>
            <person name="Schmutz J."/>
            <person name="Larimer F."/>
            <person name="Land M."/>
            <person name="Hauser L."/>
            <person name="Kyrpides N."/>
            <person name="Kim E."/>
            <person name="Tiedje J."/>
            <person name="Richardson P."/>
        </authorList>
    </citation>
    <scope>NUCLEOTIDE SEQUENCE [LARGE SCALE GENOMIC DNA]</scope>
    <source>
        <strain>PRwf-1</strain>
    </source>
</reference>
<keyword id="KW-0963">Cytoplasm</keyword>
<keyword id="KW-0342">GTP-binding</keyword>
<keyword id="KW-0547">Nucleotide-binding</keyword>
<keyword id="KW-0648">Protein biosynthesis</keyword>
<name>RF3_PSYWF</name>
<dbReference type="EMBL" id="CP000713">
    <property type="protein sequence ID" value="ABQ94986.1"/>
    <property type="molecule type" value="Genomic_DNA"/>
</dbReference>
<dbReference type="SMR" id="A5WH45"/>
<dbReference type="STRING" id="349106.PsycPRwf_2046"/>
<dbReference type="KEGG" id="prw:PsycPRwf_2046"/>
<dbReference type="eggNOG" id="COG4108">
    <property type="taxonomic scope" value="Bacteria"/>
</dbReference>
<dbReference type="HOGENOM" id="CLU_002794_2_1_6"/>
<dbReference type="GO" id="GO:0005829">
    <property type="term" value="C:cytosol"/>
    <property type="evidence" value="ECO:0007669"/>
    <property type="project" value="TreeGrafter"/>
</dbReference>
<dbReference type="GO" id="GO:0005525">
    <property type="term" value="F:GTP binding"/>
    <property type="evidence" value="ECO:0007669"/>
    <property type="project" value="UniProtKB-UniRule"/>
</dbReference>
<dbReference type="GO" id="GO:0003924">
    <property type="term" value="F:GTPase activity"/>
    <property type="evidence" value="ECO:0007669"/>
    <property type="project" value="InterPro"/>
</dbReference>
<dbReference type="GO" id="GO:0097216">
    <property type="term" value="F:guanosine tetraphosphate binding"/>
    <property type="evidence" value="ECO:0007669"/>
    <property type="project" value="UniProtKB-ARBA"/>
</dbReference>
<dbReference type="GO" id="GO:0016150">
    <property type="term" value="F:translation release factor activity, codon nonspecific"/>
    <property type="evidence" value="ECO:0007669"/>
    <property type="project" value="TreeGrafter"/>
</dbReference>
<dbReference type="GO" id="GO:0016149">
    <property type="term" value="F:translation release factor activity, codon specific"/>
    <property type="evidence" value="ECO:0007669"/>
    <property type="project" value="UniProtKB-UniRule"/>
</dbReference>
<dbReference type="GO" id="GO:0006449">
    <property type="term" value="P:regulation of translational termination"/>
    <property type="evidence" value="ECO:0007669"/>
    <property type="project" value="UniProtKB-UniRule"/>
</dbReference>
<dbReference type="CDD" id="cd04169">
    <property type="entry name" value="RF3"/>
    <property type="match status" value="1"/>
</dbReference>
<dbReference type="CDD" id="cd03689">
    <property type="entry name" value="RF3_II"/>
    <property type="match status" value="1"/>
</dbReference>
<dbReference type="CDD" id="cd16259">
    <property type="entry name" value="RF3_III"/>
    <property type="match status" value="1"/>
</dbReference>
<dbReference type="FunFam" id="2.40.30.10:FF:000040">
    <property type="entry name" value="Peptide chain release factor 3"/>
    <property type="match status" value="1"/>
</dbReference>
<dbReference type="FunFam" id="3.30.70.3280:FF:000001">
    <property type="entry name" value="Peptide chain release factor 3"/>
    <property type="match status" value="1"/>
</dbReference>
<dbReference type="FunFam" id="3.40.50.300:FF:000542">
    <property type="entry name" value="Peptide chain release factor 3"/>
    <property type="match status" value="1"/>
</dbReference>
<dbReference type="Gene3D" id="3.40.50.300">
    <property type="entry name" value="P-loop containing nucleotide triphosphate hydrolases"/>
    <property type="match status" value="3"/>
</dbReference>
<dbReference type="Gene3D" id="3.30.70.3280">
    <property type="entry name" value="Peptide chain release factor 3, domain III"/>
    <property type="match status" value="1"/>
</dbReference>
<dbReference type="HAMAP" id="MF_00072">
    <property type="entry name" value="Rel_fac_3"/>
    <property type="match status" value="1"/>
</dbReference>
<dbReference type="InterPro" id="IPR053905">
    <property type="entry name" value="EF-G-like_DII"/>
</dbReference>
<dbReference type="InterPro" id="IPR035647">
    <property type="entry name" value="EFG_III/V"/>
</dbReference>
<dbReference type="InterPro" id="IPR031157">
    <property type="entry name" value="G_TR_CS"/>
</dbReference>
<dbReference type="InterPro" id="IPR027417">
    <property type="entry name" value="P-loop_NTPase"/>
</dbReference>
<dbReference type="InterPro" id="IPR004548">
    <property type="entry name" value="PrfC"/>
</dbReference>
<dbReference type="InterPro" id="IPR032090">
    <property type="entry name" value="RF3_C"/>
</dbReference>
<dbReference type="InterPro" id="IPR038467">
    <property type="entry name" value="RF3_dom_3_sf"/>
</dbReference>
<dbReference type="InterPro" id="IPR041732">
    <property type="entry name" value="RF3_GTP-bd"/>
</dbReference>
<dbReference type="InterPro" id="IPR005225">
    <property type="entry name" value="Small_GTP-bd"/>
</dbReference>
<dbReference type="InterPro" id="IPR000795">
    <property type="entry name" value="T_Tr_GTP-bd_dom"/>
</dbReference>
<dbReference type="InterPro" id="IPR009000">
    <property type="entry name" value="Transl_B-barrel_sf"/>
</dbReference>
<dbReference type="NCBIfam" id="TIGR00503">
    <property type="entry name" value="prfC"/>
    <property type="match status" value="1"/>
</dbReference>
<dbReference type="NCBIfam" id="NF001964">
    <property type="entry name" value="PRK00741.1"/>
    <property type="match status" value="1"/>
</dbReference>
<dbReference type="NCBIfam" id="TIGR00231">
    <property type="entry name" value="small_GTP"/>
    <property type="match status" value="1"/>
</dbReference>
<dbReference type="PANTHER" id="PTHR43556">
    <property type="entry name" value="PEPTIDE CHAIN RELEASE FACTOR RF3"/>
    <property type="match status" value="1"/>
</dbReference>
<dbReference type="PANTHER" id="PTHR43556:SF2">
    <property type="entry name" value="PEPTIDE CHAIN RELEASE FACTOR RF3"/>
    <property type="match status" value="1"/>
</dbReference>
<dbReference type="Pfam" id="PF22042">
    <property type="entry name" value="EF-G_D2"/>
    <property type="match status" value="1"/>
</dbReference>
<dbReference type="Pfam" id="PF00009">
    <property type="entry name" value="GTP_EFTU"/>
    <property type="match status" value="1"/>
</dbReference>
<dbReference type="Pfam" id="PF16658">
    <property type="entry name" value="RF3_C"/>
    <property type="match status" value="1"/>
</dbReference>
<dbReference type="PRINTS" id="PR00315">
    <property type="entry name" value="ELONGATNFCT"/>
</dbReference>
<dbReference type="SUPFAM" id="SSF54980">
    <property type="entry name" value="EF-G C-terminal domain-like"/>
    <property type="match status" value="1"/>
</dbReference>
<dbReference type="SUPFAM" id="SSF52540">
    <property type="entry name" value="P-loop containing nucleoside triphosphate hydrolases"/>
    <property type="match status" value="1"/>
</dbReference>
<dbReference type="SUPFAM" id="SSF50447">
    <property type="entry name" value="Translation proteins"/>
    <property type="match status" value="1"/>
</dbReference>
<dbReference type="PROSITE" id="PS00301">
    <property type="entry name" value="G_TR_1"/>
    <property type="match status" value="1"/>
</dbReference>
<dbReference type="PROSITE" id="PS51722">
    <property type="entry name" value="G_TR_2"/>
    <property type="match status" value="1"/>
</dbReference>
<protein>
    <recommendedName>
        <fullName evidence="1">Peptide chain release factor 3</fullName>
        <shortName evidence="1">RF-3</shortName>
    </recommendedName>
</protein>